<protein>
    <recommendedName>
        <fullName evidence="1">Small ribosomal subunit protein uS9</fullName>
    </recommendedName>
    <alternativeName>
        <fullName evidence="3">30S ribosomal protein S9</fullName>
    </alternativeName>
</protein>
<evidence type="ECO:0000255" key="1">
    <source>
        <dbReference type="HAMAP-Rule" id="MF_00532"/>
    </source>
</evidence>
<evidence type="ECO:0000256" key="2">
    <source>
        <dbReference type="SAM" id="MobiDB-lite"/>
    </source>
</evidence>
<evidence type="ECO:0000305" key="3"/>
<feature type="chain" id="PRO_1000051242" description="Small ribosomal subunit protein uS9">
    <location>
        <begin position="1"/>
        <end position="130"/>
    </location>
</feature>
<feature type="region of interest" description="Disordered" evidence="2">
    <location>
        <begin position="111"/>
        <end position="130"/>
    </location>
</feature>
<feature type="compositionally biased region" description="Basic residues" evidence="2">
    <location>
        <begin position="116"/>
        <end position="130"/>
    </location>
</feature>
<proteinExistence type="inferred from homology"/>
<organism>
    <name type="scientific">Lactococcus lactis subsp. cremoris (strain SK11)</name>
    <dbReference type="NCBI Taxonomy" id="272622"/>
    <lineage>
        <taxon>Bacteria</taxon>
        <taxon>Bacillati</taxon>
        <taxon>Bacillota</taxon>
        <taxon>Bacilli</taxon>
        <taxon>Lactobacillales</taxon>
        <taxon>Streptococcaceae</taxon>
        <taxon>Lactococcus</taxon>
        <taxon>Lactococcus cremoris subsp. cremoris</taxon>
    </lineage>
</organism>
<comment type="similarity">
    <text evidence="1">Belongs to the universal ribosomal protein uS9 family.</text>
</comment>
<gene>
    <name evidence="1" type="primary">rpsI</name>
    <name type="ordered locus">LACR_2583</name>
</gene>
<sequence length="130" mass="14098">MAQVQYAGTGRRKNAVARVRLVPGTGKITVNGREVESYIPHADMRLVINQPFAATQTEGSYDTLVNVNGGGVSGQAGAIRHGIARALLQVDPDFRSALKRAGLLTRDARMVERKKPGLKKARKASQFSKR</sequence>
<accession>Q02VM1</accession>
<dbReference type="EMBL" id="CP000425">
    <property type="protein sequence ID" value="ABJ74001.1"/>
    <property type="molecule type" value="Genomic_DNA"/>
</dbReference>
<dbReference type="RefSeq" id="WP_004254378.1">
    <property type="nucleotide sequence ID" value="NC_008527.1"/>
</dbReference>
<dbReference type="SMR" id="Q02VM1"/>
<dbReference type="GeneID" id="89634602"/>
<dbReference type="KEGG" id="llc:LACR_2583"/>
<dbReference type="HOGENOM" id="CLU_046483_2_1_9"/>
<dbReference type="Proteomes" id="UP000000240">
    <property type="component" value="Chromosome"/>
</dbReference>
<dbReference type="GO" id="GO:0022627">
    <property type="term" value="C:cytosolic small ribosomal subunit"/>
    <property type="evidence" value="ECO:0007669"/>
    <property type="project" value="TreeGrafter"/>
</dbReference>
<dbReference type="GO" id="GO:0003723">
    <property type="term" value="F:RNA binding"/>
    <property type="evidence" value="ECO:0007669"/>
    <property type="project" value="TreeGrafter"/>
</dbReference>
<dbReference type="GO" id="GO:0003735">
    <property type="term" value="F:structural constituent of ribosome"/>
    <property type="evidence" value="ECO:0007669"/>
    <property type="project" value="InterPro"/>
</dbReference>
<dbReference type="GO" id="GO:0006412">
    <property type="term" value="P:translation"/>
    <property type="evidence" value="ECO:0007669"/>
    <property type="project" value="UniProtKB-UniRule"/>
</dbReference>
<dbReference type="FunFam" id="3.30.230.10:FF:000001">
    <property type="entry name" value="30S ribosomal protein S9"/>
    <property type="match status" value="1"/>
</dbReference>
<dbReference type="Gene3D" id="3.30.230.10">
    <property type="match status" value="1"/>
</dbReference>
<dbReference type="HAMAP" id="MF_00532_B">
    <property type="entry name" value="Ribosomal_uS9_B"/>
    <property type="match status" value="1"/>
</dbReference>
<dbReference type="InterPro" id="IPR020568">
    <property type="entry name" value="Ribosomal_Su5_D2-typ_SF"/>
</dbReference>
<dbReference type="InterPro" id="IPR000754">
    <property type="entry name" value="Ribosomal_uS9"/>
</dbReference>
<dbReference type="InterPro" id="IPR023035">
    <property type="entry name" value="Ribosomal_uS9_bac/plastid"/>
</dbReference>
<dbReference type="InterPro" id="IPR020574">
    <property type="entry name" value="Ribosomal_uS9_CS"/>
</dbReference>
<dbReference type="InterPro" id="IPR014721">
    <property type="entry name" value="Ribsml_uS5_D2-typ_fold_subgr"/>
</dbReference>
<dbReference type="NCBIfam" id="NF001099">
    <property type="entry name" value="PRK00132.1"/>
    <property type="match status" value="1"/>
</dbReference>
<dbReference type="PANTHER" id="PTHR21569">
    <property type="entry name" value="RIBOSOMAL PROTEIN S9"/>
    <property type="match status" value="1"/>
</dbReference>
<dbReference type="PANTHER" id="PTHR21569:SF1">
    <property type="entry name" value="SMALL RIBOSOMAL SUBUNIT PROTEIN US9M"/>
    <property type="match status" value="1"/>
</dbReference>
<dbReference type="Pfam" id="PF00380">
    <property type="entry name" value="Ribosomal_S9"/>
    <property type="match status" value="1"/>
</dbReference>
<dbReference type="SUPFAM" id="SSF54211">
    <property type="entry name" value="Ribosomal protein S5 domain 2-like"/>
    <property type="match status" value="1"/>
</dbReference>
<dbReference type="PROSITE" id="PS00360">
    <property type="entry name" value="RIBOSOMAL_S9"/>
    <property type="match status" value="1"/>
</dbReference>
<keyword id="KW-0687">Ribonucleoprotein</keyword>
<keyword id="KW-0689">Ribosomal protein</keyword>
<reference key="1">
    <citation type="journal article" date="2006" name="Proc. Natl. Acad. Sci. U.S.A.">
        <title>Comparative genomics of the lactic acid bacteria.</title>
        <authorList>
            <person name="Makarova K.S."/>
            <person name="Slesarev A."/>
            <person name="Wolf Y.I."/>
            <person name="Sorokin A."/>
            <person name="Mirkin B."/>
            <person name="Koonin E.V."/>
            <person name="Pavlov A."/>
            <person name="Pavlova N."/>
            <person name="Karamychev V."/>
            <person name="Polouchine N."/>
            <person name="Shakhova V."/>
            <person name="Grigoriev I."/>
            <person name="Lou Y."/>
            <person name="Rohksar D."/>
            <person name="Lucas S."/>
            <person name="Huang K."/>
            <person name="Goodstein D.M."/>
            <person name="Hawkins T."/>
            <person name="Plengvidhya V."/>
            <person name="Welker D."/>
            <person name="Hughes J."/>
            <person name="Goh Y."/>
            <person name="Benson A."/>
            <person name="Baldwin K."/>
            <person name="Lee J.-H."/>
            <person name="Diaz-Muniz I."/>
            <person name="Dosti B."/>
            <person name="Smeianov V."/>
            <person name="Wechter W."/>
            <person name="Barabote R."/>
            <person name="Lorca G."/>
            <person name="Altermann E."/>
            <person name="Barrangou R."/>
            <person name="Ganesan B."/>
            <person name="Xie Y."/>
            <person name="Rawsthorne H."/>
            <person name="Tamir D."/>
            <person name="Parker C."/>
            <person name="Breidt F."/>
            <person name="Broadbent J.R."/>
            <person name="Hutkins R."/>
            <person name="O'Sullivan D."/>
            <person name="Steele J."/>
            <person name="Unlu G."/>
            <person name="Saier M.H. Jr."/>
            <person name="Klaenhammer T."/>
            <person name="Richardson P."/>
            <person name="Kozyavkin S."/>
            <person name="Weimer B.C."/>
            <person name="Mills D.A."/>
        </authorList>
    </citation>
    <scope>NUCLEOTIDE SEQUENCE [LARGE SCALE GENOMIC DNA]</scope>
    <source>
        <strain>SK11</strain>
    </source>
</reference>
<name>RS9_LACLS</name>